<gene>
    <name evidence="1" type="primary">trpA</name>
    <name type="ordered locus">Asuc_1479</name>
</gene>
<organism>
    <name type="scientific">Actinobacillus succinogenes (strain ATCC 55618 / DSM 22257 / CCUG 43843 / 130Z)</name>
    <dbReference type="NCBI Taxonomy" id="339671"/>
    <lineage>
        <taxon>Bacteria</taxon>
        <taxon>Pseudomonadati</taxon>
        <taxon>Pseudomonadota</taxon>
        <taxon>Gammaproteobacteria</taxon>
        <taxon>Pasteurellales</taxon>
        <taxon>Pasteurellaceae</taxon>
        <taxon>Actinobacillus</taxon>
    </lineage>
</organism>
<accession>A6VPE0</accession>
<name>TRPA_ACTSZ</name>
<protein>
    <recommendedName>
        <fullName evidence="1">Tryptophan synthase alpha chain</fullName>
        <ecNumber evidence="1">4.2.1.20</ecNumber>
    </recommendedName>
</protein>
<proteinExistence type="inferred from homology"/>
<dbReference type="EC" id="4.2.1.20" evidence="1"/>
<dbReference type="EMBL" id="CP000746">
    <property type="protein sequence ID" value="ABR74837.1"/>
    <property type="molecule type" value="Genomic_DNA"/>
</dbReference>
<dbReference type="RefSeq" id="WP_012073214.1">
    <property type="nucleotide sequence ID" value="NC_009655.1"/>
</dbReference>
<dbReference type="SMR" id="A6VPE0"/>
<dbReference type="STRING" id="339671.Asuc_1479"/>
<dbReference type="KEGG" id="asu:Asuc_1479"/>
<dbReference type="eggNOG" id="COG0159">
    <property type="taxonomic scope" value="Bacteria"/>
</dbReference>
<dbReference type="HOGENOM" id="CLU_016734_0_4_6"/>
<dbReference type="OrthoDB" id="9804578at2"/>
<dbReference type="UniPathway" id="UPA00035">
    <property type="reaction ID" value="UER00044"/>
</dbReference>
<dbReference type="Proteomes" id="UP000001114">
    <property type="component" value="Chromosome"/>
</dbReference>
<dbReference type="GO" id="GO:0005829">
    <property type="term" value="C:cytosol"/>
    <property type="evidence" value="ECO:0007669"/>
    <property type="project" value="TreeGrafter"/>
</dbReference>
<dbReference type="GO" id="GO:0004834">
    <property type="term" value="F:tryptophan synthase activity"/>
    <property type="evidence" value="ECO:0007669"/>
    <property type="project" value="UniProtKB-UniRule"/>
</dbReference>
<dbReference type="CDD" id="cd04724">
    <property type="entry name" value="Tryptophan_synthase_alpha"/>
    <property type="match status" value="1"/>
</dbReference>
<dbReference type="FunFam" id="3.20.20.70:FF:000037">
    <property type="entry name" value="Tryptophan synthase alpha chain"/>
    <property type="match status" value="1"/>
</dbReference>
<dbReference type="Gene3D" id="3.20.20.70">
    <property type="entry name" value="Aldolase class I"/>
    <property type="match status" value="1"/>
</dbReference>
<dbReference type="HAMAP" id="MF_00131">
    <property type="entry name" value="Trp_synth_alpha"/>
    <property type="match status" value="1"/>
</dbReference>
<dbReference type="InterPro" id="IPR013785">
    <property type="entry name" value="Aldolase_TIM"/>
</dbReference>
<dbReference type="InterPro" id="IPR011060">
    <property type="entry name" value="RibuloseP-bd_barrel"/>
</dbReference>
<dbReference type="InterPro" id="IPR018204">
    <property type="entry name" value="Trp_synthase_alpha_AS"/>
</dbReference>
<dbReference type="InterPro" id="IPR002028">
    <property type="entry name" value="Trp_synthase_suA"/>
</dbReference>
<dbReference type="NCBIfam" id="TIGR00262">
    <property type="entry name" value="trpA"/>
    <property type="match status" value="1"/>
</dbReference>
<dbReference type="PANTHER" id="PTHR43406:SF1">
    <property type="entry name" value="TRYPTOPHAN SYNTHASE ALPHA CHAIN, CHLOROPLASTIC"/>
    <property type="match status" value="1"/>
</dbReference>
<dbReference type="PANTHER" id="PTHR43406">
    <property type="entry name" value="TRYPTOPHAN SYNTHASE, ALPHA CHAIN"/>
    <property type="match status" value="1"/>
</dbReference>
<dbReference type="Pfam" id="PF00290">
    <property type="entry name" value="Trp_syntA"/>
    <property type="match status" value="1"/>
</dbReference>
<dbReference type="SUPFAM" id="SSF51366">
    <property type="entry name" value="Ribulose-phoshate binding barrel"/>
    <property type="match status" value="1"/>
</dbReference>
<dbReference type="PROSITE" id="PS00167">
    <property type="entry name" value="TRP_SYNTHASE_ALPHA"/>
    <property type="match status" value="1"/>
</dbReference>
<comment type="function">
    <text evidence="1">The alpha subunit is responsible for the aldol cleavage of indoleglycerol phosphate to indole and glyceraldehyde 3-phosphate.</text>
</comment>
<comment type="catalytic activity">
    <reaction evidence="1">
        <text>(1S,2R)-1-C-(indol-3-yl)glycerol 3-phosphate + L-serine = D-glyceraldehyde 3-phosphate + L-tryptophan + H2O</text>
        <dbReference type="Rhea" id="RHEA:10532"/>
        <dbReference type="ChEBI" id="CHEBI:15377"/>
        <dbReference type="ChEBI" id="CHEBI:33384"/>
        <dbReference type="ChEBI" id="CHEBI:57912"/>
        <dbReference type="ChEBI" id="CHEBI:58866"/>
        <dbReference type="ChEBI" id="CHEBI:59776"/>
        <dbReference type="EC" id="4.2.1.20"/>
    </reaction>
</comment>
<comment type="pathway">
    <text evidence="1">Amino-acid biosynthesis; L-tryptophan biosynthesis; L-tryptophan from chorismate: step 5/5.</text>
</comment>
<comment type="subunit">
    <text evidence="1">Tetramer of two alpha and two beta chains.</text>
</comment>
<comment type="similarity">
    <text evidence="1">Belongs to the TrpA family.</text>
</comment>
<sequence>MSRFDTLFAQLQAKNEGAFVPFVTLCDPDFDRSFDIICTLADNGADALELGFPFSDPLLDGPVIQAANNRALNAGCSTEKSFRLLAKVRSKYPEIPISLLLCANLIYAQTLDKFYQRCAEAGVDAVLVADIPLLACKDYVTAAKKHGIQPVFICPPNADEKTVAGVASHTEGYTYLVSRAGVTSAENQSHAANLDTLVERLKAHNAAPILQGFGIARPEQVKQALTLGTSGAISGSATVKIIEKNLDNHPACLQELARFTREMKAATHV</sequence>
<evidence type="ECO:0000255" key="1">
    <source>
        <dbReference type="HAMAP-Rule" id="MF_00131"/>
    </source>
</evidence>
<feature type="chain" id="PRO_1000071421" description="Tryptophan synthase alpha chain">
    <location>
        <begin position="1"/>
        <end position="269"/>
    </location>
</feature>
<feature type="active site" description="Proton acceptor" evidence="1">
    <location>
        <position position="49"/>
    </location>
</feature>
<feature type="active site" description="Proton acceptor" evidence="1">
    <location>
        <position position="60"/>
    </location>
</feature>
<reference key="1">
    <citation type="journal article" date="2010" name="BMC Genomics">
        <title>A genomic perspective on the potential of Actinobacillus succinogenes for industrial succinate production.</title>
        <authorList>
            <person name="McKinlay J.B."/>
            <person name="Laivenieks M."/>
            <person name="Schindler B.D."/>
            <person name="McKinlay A.A."/>
            <person name="Siddaramappa S."/>
            <person name="Challacombe J.F."/>
            <person name="Lowry S.R."/>
            <person name="Clum A."/>
            <person name="Lapidus A.L."/>
            <person name="Burkhart K.B."/>
            <person name="Harkins V."/>
            <person name="Vieille C."/>
        </authorList>
    </citation>
    <scope>NUCLEOTIDE SEQUENCE [LARGE SCALE GENOMIC DNA]</scope>
    <source>
        <strain>ATCC 55618 / DSM 22257 / CCUG 43843 / 130Z</strain>
    </source>
</reference>
<keyword id="KW-0028">Amino-acid biosynthesis</keyword>
<keyword id="KW-0057">Aromatic amino acid biosynthesis</keyword>
<keyword id="KW-0456">Lyase</keyword>
<keyword id="KW-1185">Reference proteome</keyword>
<keyword id="KW-0822">Tryptophan biosynthesis</keyword>